<sequence>MKTFRWKVKPGMDVASVPSVRKVRFGDGYSQRAPAGLNANLKTYSVTLSVPREEATVLESFLEEHGGWKSFLWTPPYEWRQIKVTCAKWSSRVSMLRVEFSAEFEQVVN</sequence>
<dbReference type="EMBL" id="J02459">
    <property type="protein sequence ID" value="AAA96549.1"/>
    <property type="molecule type" value="Genomic_DNA"/>
</dbReference>
<dbReference type="PIR" id="I43008">
    <property type="entry name" value="TLBPML"/>
</dbReference>
<dbReference type="RefSeq" id="NP_040596.1">
    <property type="nucleotide sequence ID" value="NC_001416.1"/>
</dbReference>
<dbReference type="PDB" id="8IYK">
    <property type="method" value="EM"/>
    <property type="resolution" value="2.95 A"/>
    <property type="chains" value="E/K/M/Y/e/m=1-109"/>
</dbReference>
<dbReference type="PDB" id="8IYL">
    <property type="method" value="EM"/>
    <property type="resolution" value="3.00 A"/>
    <property type="chains" value="D/F/M/X/Z/m=1-109"/>
</dbReference>
<dbReference type="PDB" id="8K35">
    <property type="method" value="EM"/>
    <property type="resolution" value="3.44 A"/>
    <property type="chains" value="C/D/E/F/H/O=1-109"/>
</dbReference>
<dbReference type="PDB" id="8XCG">
    <property type="method" value="EM"/>
    <property type="resolution" value="3.46 A"/>
    <property type="chains" value="E/K/M/Y/e/m=1-109"/>
</dbReference>
<dbReference type="PDBsum" id="8IYK"/>
<dbReference type="PDBsum" id="8IYL"/>
<dbReference type="PDBsum" id="8K35"/>
<dbReference type="PDBsum" id="8XCG"/>
<dbReference type="EMDB" id="EMD-35824"/>
<dbReference type="EMDB" id="EMD-35825"/>
<dbReference type="EMDB" id="EMD-36844"/>
<dbReference type="EMDB" id="EMD-38242"/>
<dbReference type="SMR" id="P03737"/>
<dbReference type="IntAct" id="P03737">
    <property type="interactions" value="6"/>
</dbReference>
<dbReference type="GeneID" id="2703512"/>
<dbReference type="KEGG" id="vg:2703512"/>
<dbReference type="Proteomes" id="UP000001711">
    <property type="component" value="Genome"/>
</dbReference>
<dbReference type="GO" id="GO:0030430">
    <property type="term" value="C:host cell cytoplasm"/>
    <property type="evidence" value="ECO:0007669"/>
    <property type="project" value="UniProtKB-SubCell"/>
</dbReference>
<dbReference type="GO" id="GO:0098015">
    <property type="term" value="C:virus tail"/>
    <property type="evidence" value="ECO:0007669"/>
    <property type="project" value="UniProtKB-KW"/>
</dbReference>
<dbReference type="GO" id="GO:0099001">
    <property type="term" value="P:symbiont genome ejection through host cell envelope, long flexible tail mechanism"/>
    <property type="evidence" value="ECO:0007669"/>
    <property type="project" value="UniProtKB-KW"/>
</dbReference>
<dbReference type="GO" id="GO:0098003">
    <property type="term" value="P:viral tail assembly"/>
    <property type="evidence" value="ECO:0007669"/>
    <property type="project" value="UniProtKB-KW"/>
</dbReference>
<dbReference type="InterPro" id="IPR010265">
    <property type="entry name" value="Phage_lambda_TipM"/>
</dbReference>
<dbReference type="Pfam" id="PF05939">
    <property type="entry name" value="Phage_min_tail"/>
    <property type="match status" value="1"/>
</dbReference>
<proteinExistence type="evidence at protein level"/>
<comment type="function">
    <text evidence="1">Part of the distal tail tip which plays a role in DNA ejection during entry, and in tail assembly initiation during exit. May bind tail tip complex associated with tape measure protein and allow tail tube protein polymerization on top of tail tip.</text>
</comment>
<comment type="subcellular location">
    <subcellularLocation>
        <location>Virion</location>
    </subcellularLocation>
    <subcellularLocation>
        <location>Host cytoplasm</location>
    </subcellularLocation>
</comment>
<comment type="similarity">
    <text evidence="2">Belongs to the lambda-like tail tip protein M family.</text>
</comment>
<feature type="chain" id="PRO_0000077668" description="Tail tip protein M">
    <location>
        <begin position="1"/>
        <end position="109"/>
    </location>
</feature>
<feature type="strand" evidence="3">
    <location>
        <begin position="13"/>
        <end position="15"/>
    </location>
</feature>
<feature type="strand" evidence="3">
    <location>
        <begin position="21"/>
        <end position="24"/>
    </location>
</feature>
<feature type="strand" evidence="3">
    <location>
        <begin position="26"/>
        <end position="28"/>
    </location>
</feature>
<feature type="strand" evidence="3">
    <location>
        <begin position="30"/>
        <end position="33"/>
    </location>
</feature>
<feature type="strand" evidence="3">
    <location>
        <begin position="35"/>
        <end position="38"/>
    </location>
</feature>
<feature type="strand" evidence="3">
    <location>
        <begin position="43"/>
        <end position="51"/>
    </location>
</feature>
<feature type="turn" evidence="3">
    <location>
        <begin position="52"/>
        <end position="54"/>
    </location>
</feature>
<feature type="helix" evidence="3">
    <location>
        <begin position="55"/>
        <end position="65"/>
    </location>
</feature>
<feature type="strand" evidence="3">
    <location>
        <begin position="71"/>
        <end position="73"/>
    </location>
</feature>
<feature type="turn" evidence="3">
    <location>
        <begin position="76"/>
        <end position="78"/>
    </location>
</feature>
<feature type="strand" evidence="3">
    <location>
        <begin position="82"/>
        <end position="87"/>
    </location>
</feature>
<feature type="strand" evidence="3">
    <location>
        <begin position="90"/>
        <end position="93"/>
    </location>
</feature>
<feature type="strand" evidence="3">
    <location>
        <begin position="95"/>
        <end position="106"/>
    </location>
</feature>
<protein>
    <recommendedName>
        <fullName>Tail tip protein M</fullName>
    </recommendedName>
</protein>
<gene>
    <name type="primary">M</name>
    <name type="ordered locus">lambdap17</name>
</gene>
<keyword id="KW-0002">3D-structure</keyword>
<keyword id="KW-1035">Host cytoplasm</keyword>
<keyword id="KW-0426">Late protein</keyword>
<keyword id="KW-1185">Reference proteome</keyword>
<keyword id="KW-1171">Viral genome ejection through host cell envelope</keyword>
<keyword id="KW-1243">Viral long flexible tail ejection system</keyword>
<keyword id="KW-1162">Viral penetration into host cytoplasm</keyword>
<keyword id="KW-1188">Viral release from host cell</keyword>
<keyword id="KW-1245">Viral tail assembly</keyword>
<keyword id="KW-1227">Viral tail protein</keyword>
<keyword id="KW-0946">Virion</keyword>
<keyword id="KW-1160">Virus entry into host cell</keyword>
<reference key="1">
    <citation type="journal article" date="1982" name="J. Mol. Biol.">
        <title>Nucleotide sequence of bacteriophage lambda DNA.</title>
        <authorList>
            <person name="Sanger F."/>
            <person name="Coulson A.R."/>
            <person name="Hong G.F."/>
            <person name="Hill D.F."/>
            <person name="Petersen G.B."/>
        </authorList>
    </citation>
    <scope>NUCLEOTIDE SEQUENCE [LARGE SCALE GENOMIC DNA]</scope>
</reference>
<reference key="2">
    <citation type="journal article" date="1976" name="J. Mol. Biol.">
        <title>Morphogenesis of bacteriophage lambda tail. Polymorphism in the assembly of the major tail protein.</title>
        <authorList>
            <person name="Katsura I."/>
        </authorList>
    </citation>
    <scope>FUNCTION</scope>
</reference>
<organismHost>
    <name type="scientific">Escherichia coli</name>
    <dbReference type="NCBI Taxonomy" id="562"/>
</organismHost>
<accession>P03737</accession>
<evidence type="ECO:0000269" key="1">
    <source>
    </source>
</evidence>
<evidence type="ECO:0000305" key="2"/>
<evidence type="ECO:0007829" key="3">
    <source>
        <dbReference type="PDB" id="8XCG"/>
    </source>
</evidence>
<name>TIPM_LAMBD</name>
<organism>
    <name type="scientific">Escherichia phage lambda</name>
    <name type="common">Bacteriophage lambda</name>
    <dbReference type="NCBI Taxonomy" id="2681611"/>
    <lineage>
        <taxon>Viruses</taxon>
        <taxon>Duplodnaviria</taxon>
        <taxon>Heunggongvirae</taxon>
        <taxon>Uroviricota</taxon>
        <taxon>Caudoviricetes</taxon>
        <taxon>Lambdavirus</taxon>
        <taxon>Lambdavirus lambda</taxon>
    </lineage>
</organism>